<evidence type="ECO:0000250" key="1"/>
<evidence type="ECO:0000250" key="2">
    <source>
        <dbReference type="UniProtKB" id="P02668"/>
    </source>
</evidence>
<evidence type="ECO:0000250" key="3">
    <source>
        <dbReference type="UniProtKB" id="P02670"/>
    </source>
</evidence>
<evidence type="ECO:0000256" key="4">
    <source>
        <dbReference type="SAM" id="MobiDB-lite"/>
    </source>
</evidence>
<evidence type="ECO:0000305" key="5"/>
<proteinExistence type="evidence at transcript level"/>
<accession>P50420</accession>
<keyword id="KW-0325">Glycoprotein</keyword>
<keyword id="KW-0494">Milk protein</keyword>
<keyword id="KW-0597">Phosphoprotein</keyword>
<keyword id="KW-0964">Secreted</keyword>
<keyword id="KW-0732">Signal</keyword>
<dbReference type="EMBL" id="D32176">
    <property type="protein sequence ID" value="BAA06883.1"/>
    <property type="molecule type" value="Genomic_DNA"/>
</dbReference>
<dbReference type="GlyCosmos" id="P50420">
    <property type="glycosylation" value="8 sites, No reported glycans"/>
</dbReference>
<dbReference type="GO" id="GO:0005615">
    <property type="term" value="C:extracellular space"/>
    <property type="evidence" value="ECO:0007669"/>
    <property type="project" value="TreeGrafter"/>
</dbReference>
<dbReference type="GO" id="GO:0007595">
    <property type="term" value="P:lactation"/>
    <property type="evidence" value="ECO:0007669"/>
    <property type="project" value="TreeGrafter"/>
</dbReference>
<dbReference type="GO" id="GO:0050821">
    <property type="term" value="P:protein stabilization"/>
    <property type="evidence" value="ECO:0007669"/>
    <property type="project" value="TreeGrafter"/>
</dbReference>
<dbReference type="InterPro" id="IPR000117">
    <property type="entry name" value="Casein_kappa"/>
</dbReference>
<dbReference type="PANTHER" id="PTHR11470">
    <property type="entry name" value="KAPPA CASEIN"/>
    <property type="match status" value="1"/>
</dbReference>
<dbReference type="PANTHER" id="PTHR11470:SF2">
    <property type="entry name" value="KAPPA-CASEIN"/>
    <property type="match status" value="1"/>
</dbReference>
<dbReference type="Pfam" id="PF00997">
    <property type="entry name" value="Casein_kappa"/>
    <property type="match status" value="1"/>
</dbReference>
<dbReference type="PIRSF" id="PIRSF002374">
    <property type="entry name" value="Casein_kappa"/>
    <property type="match status" value="1"/>
</dbReference>
<protein>
    <recommendedName>
        <fullName>Kappa-casein</fullName>
    </recommendedName>
</protein>
<reference key="1">
    <citation type="journal article" date="1995" name="J. Mol. Evol.">
        <title>Molecular phylogeny based on the kappa-casein and cytochrome b sequences in the mammalian suborder ruminantia.</title>
        <authorList>
            <person name="Chikuni K."/>
            <person name="Mori Y."/>
            <person name="Tabata T."/>
            <person name="Saito M."/>
            <person name="Monma M."/>
            <person name="Kosugiyama M."/>
        </authorList>
    </citation>
    <scope>NUCLEOTIDE SEQUENCE [GENOMIC DNA]</scope>
</reference>
<comment type="function">
    <text>Kappa-casein stabilizes micelle formation, preventing casein precipitation in milk.</text>
</comment>
<comment type="subcellular location">
    <subcellularLocation>
        <location>Secreted</location>
    </subcellularLocation>
</comment>
<comment type="tissue specificity">
    <text>Mammary gland specific. Secreted in milk.</text>
</comment>
<comment type="similarity">
    <text evidence="5">Belongs to the kappa-casein family.</text>
</comment>
<name>CASK_CAPSU</name>
<feature type="signal peptide" evidence="1">
    <location>
        <begin position="1"/>
        <end position="21"/>
    </location>
</feature>
<feature type="chain" id="PRO_0000004493" description="Kappa-casein">
    <location>
        <begin position="22"/>
        <end position="192"/>
    </location>
</feature>
<feature type="region of interest" description="Disordered" evidence="4">
    <location>
        <begin position="167"/>
        <end position="192"/>
    </location>
</feature>
<feature type="site" description="Cleavage; by chymosin/rennin" evidence="1">
    <location>
        <begin position="126"/>
        <end position="127"/>
    </location>
</feature>
<feature type="modified residue" description="Phosphoserine" evidence="2">
    <location>
        <position position="148"/>
    </location>
</feature>
<feature type="modified residue" description="Phosphoserine; alternate" evidence="2">
    <location>
        <position position="172"/>
    </location>
</feature>
<feature type="modified residue" description="Phosphoserine" evidence="3">
    <location>
        <position position="189"/>
    </location>
</feature>
<feature type="glycosylation site" description="O-linked (GalNAc...) threonine" evidence="2">
    <location>
        <position position="142"/>
    </location>
</feature>
<feature type="glycosylation site" description="O-linked (GalNAc...) threonine" evidence="2">
    <location>
        <position position="152"/>
    </location>
</feature>
<feature type="glycosylation site" description="O-linked (GalNAc...) serine" evidence="2">
    <location>
        <position position="155"/>
    </location>
</feature>
<feature type="glycosylation site" description="O-linked (GalNAc...) threonine" evidence="2">
    <location>
        <position position="156"/>
    </location>
</feature>
<feature type="glycosylation site" description="O-linked (GalNAc...) threonine" evidence="2">
    <location>
        <position position="159"/>
    </location>
</feature>
<feature type="glycosylation site" description="O-linked (GalNAc...) threonine" evidence="2">
    <location>
        <position position="165"/>
    </location>
</feature>
<feature type="glycosylation site" description="O-linked (GalNAc...) serine; alternate" evidence="2">
    <location>
        <position position="172"/>
    </location>
</feature>
<feature type="glycosylation site" description="O-linked (GalNAc...) threonine" evidence="2">
    <location>
        <position position="188"/>
    </location>
</feature>
<organism>
    <name type="scientific">Capricornis sumatraensis</name>
    <name type="common">Sumatran serow</name>
    <dbReference type="NCBI Taxonomy" id="34865"/>
    <lineage>
        <taxon>Eukaryota</taxon>
        <taxon>Metazoa</taxon>
        <taxon>Chordata</taxon>
        <taxon>Craniata</taxon>
        <taxon>Vertebrata</taxon>
        <taxon>Euteleostomi</taxon>
        <taxon>Mammalia</taxon>
        <taxon>Eutheria</taxon>
        <taxon>Laurasiatheria</taxon>
        <taxon>Artiodactyla</taxon>
        <taxon>Ruminantia</taxon>
        <taxon>Pecora</taxon>
        <taxon>Bovidae</taxon>
        <taxon>Caprinae</taxon>
        <taxon>Capricornis</taxon>
    </lineage>
</organism>
<gene>
    <name type="primary">CSN3</name>
    <name type="synonym">CSN10</name>
    <name type="synonym">CSNK</name>
</gene>
<sequence length="192" mass="21513">MMKSFFLVVTILALTLPFLGAQEQNQEQPICCEKDERFFDDKIAKYIPIQYVLSRYPSYGLNYYQQRPVALINNQFLPYPYYAKPVAVRSPAQTLQWQVLPNTAPAKSCQDQPTTMARHPHPHLSFMAIPPKKDQDKTEIPTINTIASAEPTVHSTPTTEAIVNTVDNPEASSESIVSAPETNTAQVTSTEV</sequence>